<reference key="1">
    <citation type="journal article" date="2002" name="J. Bacteriol.">
        <title>Whole-genome comparison of Mycobacterium tuberculosis clinical and laboratory strains.</title>
        <authorList>
            <person name="Fleischmann R.D."/>
            <person name="Alland D."/>
            <person name="Eisen J.A."/>
            <person name="Carpenter L."/>
            <person name="White O."/>
            <person name="Peterson J.D."/>
            <person name="DeBoy R.T."/>
            <person name="Dodson R.J."/>
            <person name="Gwinn M.L."/>
            <person name="Haft D.H."/>
            <person name="Hickey E.K."/>
            <person name="Kolonay J.F."/>
            <person name="Nelson W.C."/>
            <person name="Umayam L.A."/>
            <person name="Ermolaeva M.D."/>
            <person name="Salzberg S.L."/>
            <person name="Delcher A."/>
            <person name="Utterback T.R."/>
            <person name="Weidman J.F."/>
            <person name="Khouri H.M."/>
            <person name="Gill J."/>
            <person name="Mikula A."/>
            <person name="Bishai W."/>
            <person name="Jacobs W.R. Jr."/>
            <person name="Venter J.C."/>
            <person name="Fraser C.M."/>
        </authorList>
    </citation>
    <scope>NUCLEOTIDE SEQUENCE [LARGE SCALE GENOMIC DNA]</scope>
    <source>
        <strain>CDC 1551 / Oshkosh</strain>
    </source>
</reference>
<name>CRLS_MYCTO</name>
<organism>
    <name type="scientific">Mycobacterium tuberculosis (strain CDC 1551 / Oshkosh)</name>
    <dbReference type="NCBI Taxonomy" id="83331"/>
    <lineage>
        <taxon>Bacteria</taxon>
        <taxon>Bacillati</taxon>
        <taxon>Actinomycetota</taxon>
        <taxon>Actinomycetes</taxon>
        <taxon>Mycobacteriales</taxon>
        <taxon>Mycobacteriaceae</taxon>
        <taxon>Mycobacterium</taxon>
        <taxon>Mycobacterium tuberculosis complex</taxon>
    </lineage>
</organism>
<sequence>MEPVLTQNRVLTVPNMLSVIRLALIPAFVYVVLSAHANGWGVAILVFSGVSDWADGKIARLLNQSSRLGALLDPAVDRLYMVTVPIVFGLSGIVPWWFVLTLLTRDALLAGTLPLLWSRGLSALPVTYVGKAATFGFMVGFPTILLGQCDPLWSHVLLACGWAFLIWGMYAYLWAFVLYAVQMTMVVRQMPKLKGRAHRPAAQNAGERG</sequence>
<keyword id="KW-1003">Cell membrane</keyword>
<keyword id="KW-0444">Lipid biosynthesis</keyword>
<keyword id="KW-0443">Lipid metabolism</keyword>
<keyword id="KW-0472">Membrane</keyword>
<keyword id="KW-0594">Phospholipid biosynthesis</keyword>
<keyword id="KW-1208">Phospholipid metabolism</keyword>
<keyword id="KW-1185">Reference proteome</keyword>
<keyword id="KW-0808">Transferase</keyword>
<keyword id="KW-0812">Transmembrane</keyword>
<keyword id="KW-1133">Transmembrane helix</keyword>
<comment type="function">
    <text evidence="1">May catalyze the biosynthesis of cardiolipin from phosphatidylglycerol (PG) and CDP-diacylglycerol.</text>
</comment>
<comment type="catalytic activity">
    <reaction evidence="1">
        <text>a CDP-1,2-diacyl-sn-glycerol + a 1,2-diacyl-sn-glycero-3-phospho-(1'-sn-glycerol) = a cardiolipin + CMP + H(+)</text>
        <dbReference type="Rhea" id="RHEA:32931"/>
        <dbReference type="ChEBI" id="CHEBI:15378"/>
        <dbReference type="ChEBI" id="CHEBI:58332"/>
        <dbReference type="ChEBI" id="CHEBI:60377"/>
        <dbReference type="ChEBI" id="CHEBI:62237"/>
        <dbReference type="ChEBI" id="CHEBI:64716"/>
        <dbReference type="EC" id="2.7.8.41"/>
    </reaction>
</comment>
<comment type="pathway">
    <text evidence="1">Lipid metabolism; phospholipid metabolism.</text>
</comment>
<comment type="subcellular location">
    <subcellularLocation>
        <location evidence="3">Cell membrane</location>
        <topology evidence="3">Multi-pass membrane protein</topology>
    </subcellularLocation>
</comment>
<comment type="similarity">
    <text evidence="3">Belongs to the CDP-alcohol phosphatidyltransferase class-I family.</text>
</comment>
<protein>
    <recommendedName>
        <fullName evidence="1">Putative cardiolipin synthase</fullName>
        <ecNumber evidence="1">2.7.8.41</ecNumber>
    </recommendedName>
</protein>
<proteinExistence type="inferred from homology"/>
<feature type="chain" id="PRO_0000426956" description="Putative cardiolipin synthase">
    <location>
        <begin position="1"/>
        <end position="209"/>
    </location>
</feature>
<feature type="transmembrane region" description="Helical" evidence="2">
    <location>
        <begin position="27"/>
        <end position="47"/>
    </location>
</feature>
<feature type="transmembrane region" description="Helical" evidence="2">
    <location>
        <begin position="82"/>
        <end position="102"/>
    </location>
</feature>
<feature type="transmembrane region" description="Helical" evidence="2">
    <location>
        <begin position="126"/>
        <end position="146"/>
    </location>
</feature>
<feature type="transmembrane region" description="Helical" evidence="2">
    <location>
        <begin position="157"/>
        <end position="177"/>
    </location>
</feature>
<accession>P9WPG4</accession>
<accession>L0T801</accession>
<accession>P63753</accession>
<accession>Q50611</accession>
<evidence type="ECO:0000250" key="1">
    <source>
        <dbReference type="UniProtKB" id="P9WPG5"/>
    </source>
</evidence>
<evidence type="ECO:0000255" key="2"/>
<evidence type="ECO:0000305" key="3"/>
<evidence type="ECO:0000312" key="4">
    <source>
        <dbReference type="EMBL" id="AAK46143.1"/>
    </source>
</evidence>
<gene>
    <name evidence="4" type="primary">pgsA-1</name>
    <name type="ordered locus">MT1870</name>
</gene>
<dbReference type="EC" id="2.7.8.41" evidence="1"/>
<dbReference type="EMBL" id="AE000516">
    <property type="protein sequence ID" value="AAK46143.1"/>
    <property type="molecule type" value="Genomic_DNA"/>
</dbReference>
<dbReference type="PIR" id="G70720">
    <property type="entry name" value="G70720"/>
</dbReference>
<dbReference type="RefSeq" id="WP_003409227.1">
    <property type="nucleotide sequence ID" value="NZ_KK341227.1"/>
</dbReference>
<dbReference type="SMR" id="P9WPG4"/>
<dbReference type="KEGG" id="mtc:MT1870"/>
<dbReference type="PATRIC" id="fig|83331.31.peg.2014"/>
<dbReference type="HOGENOM" id="CLU_051314_6_1_11"/>
<dbReference type="UniPathway" id="UPA00085"/>
<dbReference type="Proteomes" id="UP000001020">
    <property type="component" value="Chromosome"/>
</dbReference>
<dbReference type="GO" id="GO:0005886">
    <property type="term" value="C:plasma membrane"/>
    <property type="evidence" value="ECO:0007669"/>
    <property type="project" value="UniProtKB-SubCell"/>
</dbReference>
<dbReference type="GO" id="GO:0043337">
    <property type="term" value="F:cardiolipin synthase (CMP-forming)"/>
    <property type="evidence" value="ECO:0007669"/>
    <property type="project" value="UniProtKB-EC"/>
</dbReference>
<dbReference type="GO" id="GO:0008444">
    <property type="term" value="F:CDP-diacylglycerol-glycerol-3-phosphate 3-phosphatidyltransferase activity"/>
    <property type="evidence" value="ECO:0007669"/>
    <property type="project" value="InterPro"/>
</dbReference>
<dbReference type="GO" id="GO:0046474">
    <property type="term" value="P:glycerophospholipid biosynthetic process"/>
    <property type="evidence" value="ECO:0007669"/>
    <property type="project" value="TreeGrafter"/>
</dbReference>
<dbReference type="Gene3D" id="1.20.120.1760">
    <property type="match status" value="1"/>
</dbReference>
<dbReference type="InterPro" id="IPR050324">
    <property type="entry name" value="CDP-alcohol_PTase-I"/>
</dbReference>
<dbReference type="InterPro" id="IPR000462">
    <property type="entry name" value="CDP-OH_P_trans"/>
</dbReference>
<dbReference type="InterPro" id="IPR043130">
    <property type="entry name" value="CDP-OH_PTrfase_TM_dom"/>
</dbReference>
<dbReference type="InterPro" id="IPR048254">
    <property type="entry name" value="CDP_ALCOHOL_P_TRANSF_CS"/>
</dbReference>
<dbReference type="InterPro" id="IPR004570">
    <property type="entry name" value="Phosphatidylglycerol_P_synth"/>
</dbReference>
<dbReference type="PANTHER" id="PTHR14269:SF62">
    <property type="entry name" value="CDP-DIACYLGLYCEROL--GLYCEROL-3-PHOSPHATE 3-PHOSPHATIDYLTRANSFERASE 1, CHLOROPLASTIC"/>
    <property type="match status" value="1"/>
</dbReference>
<dbReference type="PANTHER" id="PTHR14269">
    <property type="entry name" value="CDP-DIACYLGLYCEROL--GLYCEROL-3-PHOSPHATE 3-PHOSPHATIDYLTRANSFERASE-RELATED"/>
    <property type="match status" value="1"/>
</dbReference>
<dbReference type="Pfam" id="PF01066">
    <property type="entry name" value="CDP-OH_P_transf"/>
    <property type="match status" value="1"/>
</dbReference>
<dbReference type="PIRSF" id="PIRSF000847">
    <property type="entry name" value="Phos_ph_gly_syn"/>
    <property type="match status" value="1"/>
</dbReference>
<dbReference type="PROSITE" id="PS00379">
    <property type="entry name" value="CDP_ALCOHOL_P_TRANSF"/>
    <property type="match status" value="1"/>
</dbReference>